<keyword id="KW-1003">Cell membrane</keyword>
<keyword id="KW-0472">Membrane</keyword>
<keyword id="KW-0653">Protein transport</keyword>
<keyword id="KW-0811">Translocation</keyword>
<keyword id="KW-0812">Transmembrane</keyword>
<keyword id="KW-1133">Transmembrane helix</keyword>
<keyword id="KW-0813">Transport</keyword>
<sequence>MIQTLVNFFRTKEVRNKIFFTLAMLVIFKIGTYIPAPGVNPAAFDNPQGSQGATELLNTFGGGALKRFSIFAMGIVPYITASIVMQLLQMDIVPKFSEWAKQGEVGRRKLNNVTRYLAISLAFIQSIGMAFQFNNYLKGALIINQSIMSYLLIALVLTAGTAFLIWLGDQITQFGVGNGISIIIFAGILSTLPASLIQFGQTAFVGQEDTSLAWLKVLGLLVSLILLTVGAIYVLEAVRKIPIQYAKKQTAQRLGSQATYLPLKVNSAGVIPVIFAMAFFLLPRTLTLFYPDKEWAQNIANAANPSSNVGMVVYIVLIILFTYFYAFVQVNPEKMADNLKKQGSYVPGIRPGEQTKKYITKVLYRLTFVGSIFLAVISILPILATKFMGLPQSIQIGGTSLLIVIGVAIETMKSLEAQVSQKEYKGFGGR</sequence>
<reference key="1">
    <citation type="journal article" date="2002" name="Lancet">
        <title>Genome and virulence determinants of high virulence community-acquired MRSA.</title>
        <authorList>
            <person name="Baba T."/>
            <person name="Takeuchi F."/>
            <person name="Kuroda M."/>
            <person name="Yuzawa H."/>
            <person name="Aoki K."/>
            <person name="Oguchi A."/>
            <person name="Nagai Y."/>
            <person name="Iwama N."/>
            <person name="Asano K."/>
            <person name="Naimi T."/>
            <person name="Kuroda H."/>
            <person name="Cui L."/>
            <person name="Yamamoto K."/>
            <person name="Hiramatsu K."/>
        </authorList>
    </citation>
    <scope>NUCLEOTIDE SEQUENCE [LARGE SCALE GENOMIC DNA]</scope>
    <source>
        <strain>MW2</strain>
    </source>
</reference>
<organism>
    <name type="scientific">Staphylococcus aureus (strain MW2)</name>
    <dbReference type="NCBI Taxonomy" id="196620"/>
    <lineage>
        <taxon>Bacteria</taxon>
        <taxon>Bacillati</taxon>
        <taxon>Bacillota</taxon>
        <taxon>Bacilli</taxon>
        <taxon>Bacillales</taxon>
        <taxon>Staphylococcaceae</taxon>
        <taxon>Staphylococcus</taxon>
    </lineage>
</organism>
<proteinExistence type="inferred from homology"/>
<accession>Q7A086</accession>
<feature type="chain" id="PRO_0000131746" description="Protein translocase subunit SecY">
    <location>
        <begin position="1"/>
        <end position="430"/>
    </location>
</feature>
<feature type="transmembrane region" description="Helical" evidence="1">
    <location>
        <begin position="18"/>
        <end position="38"/>
    </location>
</feature>
<feature type="transmembrane region" description="Helical" evidence="1">
    <location>
        <begin position="68"/>
        <end position="88"/>
    </location>
</feature>
<feature type="transmembrane region" description="Helical" evidence="1">
    <location>
        <begin position="117"/>
        <end position="137"/>
    </location>
</feature>
<feature type="transmembrane region" description="Helical" evidence="1">
    <location>
        <begin position="147"/>
        <end position="167"/>
    </location>
</feature>
<feature type="transmembrane region" description="Helical" evidence="1">
    <location>
        <begin position="179"/>
        <end position="199"/>
    </location>
</feature>
<feature type="transmembrane region" description="Helical" evidence="1">
    <location>
        <begin position="217"/>
        <end position="237"/>
    </location>
</feature>
<feature type="transmembrane region" description="Helical" evidence="1">
    <location>
        <begin position="269"/>
        <end position="289"/>
    </location>
</feature>
<feature type="transmembrane region" description="Helical" evidence="1">
    <location>
        <begin position="308"/>
        <end position="328"/>
    </location>
</feature>
<feature type="transmembrane region" description="Helical" evidence="1">
    <location>
        <begin position="368"/>
        <end position="388"/>
    </location>
</feature>
<feature type="transmembrane region" description="Helical" evidence="1">
    <location>
        <begin position="389"/>
        <end position="409"/>
    </location>
</feature>
<protein>
    <recommendedName>
        <fullName evidence="1">Protein translocase subunit SecY</fullName>
    </recommendedName>
</protein>
<name>SECY_STAAW</name>
<gene>
    <name evidence="1" type="primary">secY</name>
    <name type="ordered locus">MW2149</name>
</gene>
<dbReference type="EMBL" id="BA000033">
    <property type="protein sequence ID" value="BAB96014.1"/>
    <property type="molecule type" value="Genomic_DNA"/>
</dbReference>
<dbReference type="RefSeq" id="WP_000616784.1">
    <property type="nucleotide sequence ID" value="NC_003923.1"/>
</dbReference>
<dbReference type="SMR" id="Q7A086"/>
<dbReference type="KEGG" id="sam:MW2149"/>
<dbReference type="HOGENOM" id="CLU_030313_0_1_9"/>
<dbReference type="GO" id="GO:0005886">
    <property type="term" value="C:plasma membrane"/>
    <property type="evidence" value="ECO:0007669"/>
    <property type="project" value="UniProtKB-SubCell"/>
</dbReference>
<dbReference type="GO" id="GO:0065002">
    <property type="term" value="P:intracellular protein transmembrane transport"/>
    <property type="evidence" value="ECO:0007669"/>
    <property type="project" value="UniProtKB-UniRule"/>
</dbReference>
<dbReference type="GO" id="GO:0006605">
    <property type="term" value="P:protein targeting"/>
    <property type="evidence" value="ECO:0007669"/>
    <property type="project" value="UniProtKB-UniRule"/>
</dbReference>
<dbReference type="GO" id="GO:0043952">
    <property type="term" value="P:protein transport by the Sec complex"/>
    <property type="evidence" value="ECO:0007669"/>
    <property type="project" value="UniProtKB-UniRule"/>
</dbReference>
<dbReference type="FunFam" id="1.10.3370.10:FF:000001">
    <property type="entry name" value="Preprotein translocase subunit SecY"/>
    <property type="match status" value="1"/>
</dbReference>
<dbReference type="Gene3D" id="1.10.3370.10">
    <property type="entry name" value="SecY subunit domain"/>
    <property type="match status" value="1"/>
</dbReference>
<dbReference type="HAMAP" id="MF_01465">
    <property type="entry name" value="SecY"/>
    <property type="match status" value="1"/>
</dbReference>
<dbReference type="InterPro" id="IPR026593">
    <property type="entry name" value="SecY"/>
</dbReference>
<dbReference type="InterPro" id="IPR002208">
    <property type="entry name" value="SecY/SEC61-alpha"/>
</dbReference>
<dbReference type="InterPro" id="IPR030659">
    <property type="entry name" value="SecY_CS"/>
</dbReference>
<dbReference type="InterPro" id="IPR023201">
    <property type="entry name" value="SecY_dom_sf"/>
</dbReference>
<dbReference type="NCBIfam" id="TIGR00967">
    <property type="entry name" value="3a0501s007"/>
    <property type="match status" value="1"/>
</dbReference>
<dbReference type="PANTHER" id="PTHR10906">
    <property type="entry name" value="SECY/SEC61-ALPHA FAMILY MEMBER"/>
    <property type="match status" value="1"/>
</dbReference>
<dbReference type="Pfam" id="PF00344">
    <property type="entry name" value="SecY"/>
    <property type="match status" value="1"/>
</dbReference>
<dbReference type="PIRSF" id="PIRSF004557">
    <property type="entry name" value="SecY"/>
    <property type="match status" value="1"/>
</dbReference>
<dbReference type="PRINTS" id="PR00303">
    <property type="entry name" value="SECYTRNLCASE"/>
</dbReference>
<dbReference type="SUPFAM" id="SSF103491">
    <property type="entry name" value="Preprotein translocase SecY subunit"/>
    <property type="match status" value="1"/>
</dbReference>
<dbReference type="PROSITE" id="PS00755">
    <property type="entry name" value="SECY_1"/>
    <property type="match status" value="1"/>
</dbReference>
<dbReference type="PROSITE" id="PS00756">
    <property type="entry name" value="SECY_2"/>
    <property type="match status" value="1"/>
</dbReference>
<comment type="function">
    <text evidence="1">The central subunit of the protein translocation channel SecYEG. Consists of two halves formed by TMs 1-5 and 6-10. These two domains form a lateral gate at the front which open onto the bilayer between TMs 2 and 7, and are clamped together by SecE at the back. The channel is closed by both a pore ring composed of hydrophobic SecY resides and a short helix (helix 2A) on the extracellular side of the membrane which forms a plug. The plug probably moves laterally to allow the channel to open. The ring and the pore may move independently.</text>
</comment>
<comment type="subunit">
    <text evidence="1">Component of the Sec protein translocase complex. Heterotrimer consisting of SecY, SecE and SecG subunits. The heterotrimers can form oligomers, although 1 heterotrimer is thought to be able to translocate proteins. Interacts with the ribosome. Interacts with SecDF, and other proteins may be involved. Interacts with SecA.</text>
</comment>
<comment type="subcellular location">
    <subcellularLocation>
        <location evidence="1">Cell membrane</location>
        <topology evidence="1">Multi-pass membrane protein</topology>
    </subcellularLocation>
</comment>
<comment type="similarity">
    <text evidence="1">Belongs to the SecY/SEC61-alpha family.</text>
</comment>
<evidence type="ECO:0000255" key="1">
    <source>
        <dbReference type="HAMAP-Rule" id="MF_01465"/>
    </source>
</evidence>